<comment type="subunit">
    <text evidence="1">Part of the 50S ribosomal subunit.</text>
</comment>
<comment type="similarity">
    <text evidence="1">Belongs to the universal ribosomal protein uL30 family.</text>
</comment>
<name>RL30_ACIBC</name>
<keyword id="KW-0687">Ribonucleoprotein</keyword>
<keyword id="KW-0689">Ribosomal protein</keyword>
<reference key="1">
    <citation type="journal article" date="2008" name="Antimicrob. Agents Chemother.">
        <title>Whole-genome pyrosequencing of an epidemic multidrug-resistant Acinetobacter baumannii strain belonging to the European clone II group.</title>
        <authorList>
            <person name="Iacono M."/>
            <person name="Villa L."/>
            <person name="Fortini D."/>
            <person name="Bordoni R."/>
            <person name="Imperi F."/>
            <person name="Bonnal R.J."/>
            <person name="Sicheritz-Ponten T."/>
            <person name="De Bellis G."/>
            <person name="Visca P."/>
            <person name="Cassone A."/>
            <person name="Carattoli A."/>
        </authorList>
    </citation>
    <scope>NUCLEOTIDE SEQUENCE [LARGE SCALE GENOMIC DNA]</scope>
    <source>
        <strain>ACICU</strain>
    </source>
</reference>
<evidence type="ECO:0000255" key="1">
    <source>
        <dbReference type="HAMAP-Rule" id="MF_01371"/>
    </source>
</evidence>
<evidence type="ECO:0000305" key="2"/>
<sequence length="58" mass="6642">MKTIKVTQTKSSSHRLKNHKLCLQGLGLRRIGHTVEVQDTPSNRGMINKVYYMVSVEE</sequence>
<feature type="chain" id="PRO_1000144637" description="Large ribosomal subunit protein uL30">
    <location>
        <begin position="1"/>
        <end position="58"/>
    </location>
</feature>
<dbReference type="EMBL" id="CP000863">
    <property type="protein sequence ID" value="ACC58572.1"/>
    <property type="molecule type" value="Genomic_DNA"/>
</dbReference>
<dbReference type="RefSeq" id="WP_000849088.1">
    <property type="nucleotide sequence ID" value="NZ_CP031380.1"/>
</dbReference>
<dbReference type="SMR" id="B2HZ90"/>
<dbReference type="GeneID" id="9380834"/>
<dbReference type="KEGG" id="abc:ACICU_03260"/>
<dbReference type="HOGENOM" id="CLU_131047_1_4_6"/>
<dbReference type="Proteomes" id="UP000008839">
    <property type="component" value="Chromosome"/>
</dbReference>
<dbReference type="GO" id="GO:0022625">
    <property type="term" value="C:cytosolic large ribosomal subunit"/>
    <property type="evidence" value="ECO:0007669"/>
    <property type="project" value="TreeGrafter"/>
</dbReference>
<dbReference type="GO" id="GO:0003735">
    <property type="term" value="F:structural constituent of ribosome"/>
    <property type="evidence" value="ECO:0007669"/>
    <property type="project" value="InterPro"/>
</dbReference>
<dbReference type="GO" id="GO:0006412">
    <property type="term" value="P:translation"/>
    <property type="evidence" value="ECO:0007669"/>
    <property type="project" value="UniProtKB-UniRule"/>
</dbReference>
<dbReference type="CDD" id="cd01658">
    <property type="entry name" value="Ribosomal_L30"/>
    <property type="match status" value="1"/>
</dbReference>
<dbReference type="FunFam" id="3.30.1390.20:FF:000001">
    <property type="entry name" value="50S ribosomal protein L30"/>
    <property type="match status" value="1"/>
</dbReference>
<dbReference type="Gene3D" id="3.30.1390.20">
    <property type="entry name" value="Ribosomal protein L30, ferredoxin-like fold domain"/>
    <property type="match status" value="1"/>
</dbReference>
<dbReference type="HAMAP" id="MF_01371_B">
    <property type="entry name" value="Ribosomal_uL30_B"/>
    <property type="match status" value="1"/>
</dbReference>
<dbReference type="InterPro" id="IPR036919">
    <property type="entry name" value="Ribo_uL30_ferredoxin-like_sf"/>
</dbReference>
<dbReference type="InterPro" id="IPR005996">
    <property type="entry name" value="Ribosomal_uL30_bac-type"/>
</dbReference>
<dbReference type="InterPro" id="IPR016082">
    <property type="entry name" value="Ribosomal_uL30_ferredoxin-like"/>
</dbReference>
<dbReference type="NCBIfam" id="TIGR01308">
    <property type="entry name" value="rpmD_bact"/>
    <property type="match status" value="1"/>
</dbReference>
<dbReference type="PANTHER" id="PTHR15892:SF2">
    <property type="entry name" value="LARGE RIBOSOMAL SUBUNIT PROTEIN UL30M"/>
    <property type="match status" value="1"/>
</dbReference>
<dbReference type="PANTHER" id="PTHR15892">
    <property type="entry name" value="MITOCHONDRIAL RIBOSOMAL PROTEIN L30"/>
    <property type="match status" value="1"/>
</dbReference>
<dbReference type="Pfam" id="PF00327">
    <property type="entry name" value="Ribosomal_L30"/>
    <property type="match status" value="1"/>
</dbReference>
<dbReference type="PIRSF" id="PIRSF002211">
    <property type="entry name" value="Ribosomal_L30_bac-type"/>
    <property type="match status" value="1"/>
</dbReference>
<dbReference type="SUPFAM" id="SSF55129">
    <property type="entry name" value="Ribosomal protein L30p/L7e"/>
    <property type="match status" value="1"/>
</dbReference>
<proteinExistence type="inferred from homology"/>
<accession>B2HZ90</accession>
<organism>
    <name type="scientific">Acinetobacter baumannii (strain ACICU)</name>
    <dbReference type="NCBI Taxonomy" id="405416"/>
    <lineage>
        <taxon>Bacteria</taxon>
        <taxon>Pseudomonadati</taxon>
        <taxon>Pseudomonadota</taxon>
        <taxon>Gammaproteobacteria</taxon>
        <taxon>Moraxellales</taxon>
        <taxon>Moraxellaceae</taxon>
        <taxon>Acinetobacter</taxon>
        <taxon>Acinetobacter calcoaceticus/baumannii complex</taxon>
    </lineage>
</organism>
<gene>
    <name evidence="1" type="primary">rpmD</name>
    <name type="ordered locus">ACICU_03260</name>
</gene>
<protein>
    <recommendedName>
        <fullName evidence="1">Large ribosomal subunit protein uL30</fullName>
    </recommendedName>
    <alternativeName>
        <fullName evidence="2">50S ribosomal protein L30</fullName>
    </alternativeName>
</protein>